<accession>A3DRP8</accession>
<organism>
    <name type="scientific">Influenza A virus (strain A/USA:Memphis/10/1996 H1N1)</name>
    <dbReference type="NCBI Taxonomy" id="416730"/>
    <lineage>
        <taxon>Viruses</taxon>
        <taxon>Riboviria</taxon>
        <taxon>Orthornavirae</taxon>
        <taxon>Negarnaviricota</taxon>
        <taxon>Polyploviricotina</taxon>
        <taxon>Insthoviricetes</taxon>
        <taxon>Articulavirales</taxon>
        <taxon>Orthomyxoviridae</taxon>
        <taxon>Alphainfluenzavirus</taxon>
        <taxon>Alphainfluenzavirus influenzae</taxon>
        <taxon>Influenza A virus</taxon>
    </lineage>
</organism>
<reference key="1">
    <citation type="submission" date="2007-02" db="EMBL/GenBank/DDBJ databases">
        <title>The NIAID influenza genome sequencing project.</title>
        <authorList>
            <person name="Ghedin E."/>
            <person name="Spiro D."/>
            <person name="Miller N."/>
            <person name="Zaborsky J."/>
            <person name="Feldblyum T."/>
            <person name="Subbu V."/>
            <person name="Shumway M."/>
            <person name="Sparenborg J."/>
            <person name="Groveman L."/>
            <person name="Halpin R."/>
            <person name="Sitz J."/>
            <person name="Koo H."/>
            <person name="Salzberg S.L."/>
            <person name="Webster R.G."/>
            <person name="Hoffmann E."/>
            <person name="Krauss S."/>
            <person name="Naeve C."/>
            <person name="Bao Y."/>
            <person name="Bolotov P."/>
            <person name="Dernovoy D."/>
            <person name="Kiryutin B."/>
            <person name="Lipman D.J."/>
            <person name="Tatusova T."/>
        </authorList>
    </citation>
    <scope>NUCLEOTIDE SEQUENCE [GENOMIC RNA]</scope>
</reference>
<reference key="2">
    <citation type="submission" date="2007-02" db="EMBL/GenBank/DDBJ databases">
        <authorList>
            <consortium name="The NIAID Influenza Genome Sequencing Consortium"/>
        </authorList>
    </citation>
    <scope>NUCLEOTIDE SEQUENCE [GENOMIC RNA]</scope>
</reference>
<name>RDRP_I96A2</name>
<gene>
    <name evidence="2" type="primary">PB1</name>
</gene>
<dbReference type="EC" id="2.7.7.48" evidence="2"/>
<dbReference type="EMBL" id="CY019801">
    <property type="protein sequence ID" value="ABN50970.1"/>
    <property type="molecule type" value="Viral_cRNA"/>
</dbReference>
<dbReference type="SMR" id="A3DRP8"/>
<dbReference type="Proteomes" id="UP000007557">
    <property type="component" value="Genome"/>
</dbReference>
<dbReference type="GO" id="GO:0030430">
    <property type="term" value="C:host cell cytoplasm"/>
    <property type="evidence" value="ECO:0007669"/>
    <property type="project" value="UniProtKB-SubCell"/>
</dbReference>
<dbReference type="GO" id="GO:0042025">
    <property type="term" value="C:host cell nucleus"/>
    <property type="evidence" value="ECO:0007669"/>
    <property type="project" value="UniProtKB-SubCell"/>
</dbReference>
<dbReference type="GO" id="GO:0000166">
    <property type="term" value="F:nucleotide binding"/>
    <property type="evidence" value="ECO:0007669"/>
    <property type="project" value="UniProtKB-UniRule"/>
</dbReference>
<dbReference type="GO" id="GO:0003723">
    <property type="term" value="F:RNA binding"/>
    <property type="evidence" value="ECO:0007669"/>
    <property type="project" value="InterPro"/>
</dbReference>
<dbReference type="GO" id="GO:0003968">
    <property type="term" value="F:RNA-directed RNA polymerase activity"/>
    <property type="evidence" value="ECO:0007669"/>
    <property type="project" value="UniProtKB-UniRule"/>
</dbReference>
<dbReference type="GO" id="GO:0006351">
    <property type="term" value="P:DNA-templated transcription"/>
    <property type="evidence" value="ECO:0007669"/>
    <property type="project" value="UniProtKB-UniRule"/>
</dbReference>
<dbReference type="GO" id="GO:0039657">
    <property type="term" value="P:symbiont-mediated suppression of host gene expression"/>
    <property type="evidence" value="ECO:0007669"/>
    <property type="project" value="UniProtKB-KW"/>
</dbReference>
<dbReference type="GO" id="GO:0039523">
    <property type="term" value="P:symbiont-mediated suppression of host mRNA transcription via inhibition of RNA polymerase II activity"/>
    <property type="evidence" value="ECO:0007669"/>
    <property type="project" value="UniProtKB-UniRule"/>
</dbReference>
<dbReference type="GO" id="GO:0039694">
    <property type="term" value="P:viral RNA genome replication"/>
    <property type="evidence" value="ECO:0007669"/>
    <property type="project" value="UniProtKB-UniRule"/>
</dbReference>
<dbReference type="GO" id="GO:0019083">
    <property type="term" value="P:viral transcription"/>
    <property type="evidence" value="ECO:0007669"/>
    <property type="project" value="UniProtKB-KW"/>
</dbReference>
<dbReference type="Gene3D" id="6.10.140.720">
    <property type="match status" value="1"/>
</dbReference>
<dbReference type="HAMAP" id="MF_04065">
    <property type="entry name" value="INFV_RDRP"/>
    <property type="match status" value="1"/>
</dbReference>
<dbReference type="InterPro" id="IPR007099">
    <property type="entry name" value="RNA-dir_pol_NSvirus"/>
</dbReference>
<dbReference type="InterPro" id="IPR001407">
    <property type="entry name" value="RNA_pol_PB1_influenza"/>
</dbReference>
<dbReference type="Pfam" id="PF00602">
    <property type="entry name" value="Flu_PB1"/>
    <property type="match status" value="1"/>
</dbReference>
<dbReference type="PIRSF" id="PIRSF000827">
    <property type="entry name" value="RdRPol_OMV"/>
    <property type="match status" value="1"/>
</dbReference>
<dbReference type="PROSITE" id="PS50525">
    <property type="entry name" value="RDRP_SSRNA_NEG_SEG"/>
    <property type="match status" value="1"/>
</dbReference>
<sequence length="757" mass="86540">MDVNPTLLFLKVPAQNAISTTFPYTGDPPYSHGTGTGYTMDTVNRTHQYSERGRWTKNTETGAPQLNPIDGPLPKDNEPSGYAQTDCVLEAMAFLEESHPGIFENSCIETMEVVQQTRVDKLTQGRQTYDWTLNRNQPAATALANTIEVFRSNDLIANESGRLIDFLKDVMESMDREEVEITTHFQRKRRVRDNVTKKMVTQRTIGKKKHKLDKRSYLIRALTLNTMTKDAERGKLKRRAIATPGMQIRGFVYFVETLARSICEKLEQSGLPVGGNEKKAKLANVVRKMMTNSQDTEISFTITGDNTKWNENQNPRMFLAMITYITRNQPEWFRNILSIAPIMFSNKMARLGKGYMFESKSMKLRTQIPAEMLANIDLKYFNDSTKKKIEKIRPLLIDGTASLSPGMMMGMFNMLSTVLGVSILNLGQKRYTKTTYWWDGLQSSDDFALIVNAPNYAGIQAGVDRFYRTCKLLGINMSKKKSYINRTGTFEFTSFFYRYGFVANFSMELPSFGVSGVNESADMSIGVTVIKNNMINNDLGPATAQMALQLFIKDYRYTYRCHRGDTQIQTRRSFEIKKLWDQTRSKAGLLVSDGGPNLYNIRNLHIPEVCLKWELMDEDYQGRLCNPLNPFVSHKEIESVNNAVMMPAHGPAKNMEYDAVATTHSWVPKRNRSILNTSQRGILEDEQMYQRCCNLFEKFFPSSSYRRPVGISSMVEAMVSRARIDARIDFESGRIKKEEFSEIMKTCSTIEDLRRQK</sequence>
<organismHost>
    <name type="scientific">Aves</name>
    <dbReference type="NCBI Taxonomy" id="8782"/>
</organismHost>
<organismHost>
    <name type="scientific">Homo sapiens</name>
    <name type="common">Human</name>
    <dbReference type="NCBI Taxonomy" id="9606"/>
</organismHost>
<organismHost>
    <name type="scientific">Sus scrofa</name>
    <name type="common">Pig</name>
    <dbReference type="NCBI Taxonomy" id="9823"/>
</organismHost>
<proteinExistence type="inferred from homology"/>
<comment type="function">
    <text evidence="2">RNA-dependent RNA polymerase which is responsible for replication and transcription of virus RNA segments. The transcription of viral mRNAs occurs by a unique mechanism called cap-snatching. 5' methylated caps of cellular mRNAs are cleaved after 10-13 nucleotides by PA. In turn, these short capped RNAs are used as primers by PB1 for transcription of viral mRNAs. During virus replication, PB1 initiates RNA synthesis and copy vRNA into complementary RNA (cRNA) which in turn serves as a template for the production of more vRNAs.</text>
</comment>
<comment type="catalytic activity">
    <reaction evidence="2">
        <text>RNA(n) + a ribonucleoside 5'-triphosphate = RNA(n+1) + diphosphate</text>
        <dbReference type="Rhea" id="RHEA:21248"/>
        <dbReference type="Rhea" id="RHEA-COMP:14527"/>
        <dbReference type="Rhea" id="RHEA-COMP:17342"/>
        <dbReference type="ChEBI" id="CHEBI:33019"/>
        <dbReference type="ChEBI" id="CHEBI:61557"/>
        <dbReference type="ChEBI" id="CHEBI:140395"/>
        <dbReference type="EC" id="2.7.7.48"/>
    </reaction>
</comment>
<comment type="subunit">
    <text evidence="1 2">Influenza RNA polymerase is composed of three subunits: PB1, PB2 and PA. Interacts (via N-terminus) with PA (via C-terminus). Interacts (via C-terminus) with PB2 (via N-terminus); this interaction is essential for transcription initiation. Interacts (via C-terminus) with human PKP2 (via N-terminus); the interaction competitively inhibits the interaction between the RNA polymerase subunits PB1 and PB2 (By similarity).</text>
</comment>
<comment type="subcellular location">
    <subcellularLocation>
        <location evidence="2">Host nucleus</location>
    </subcellularLocation>
    <subcellularLocation>
        <location evidence="2">Host cytoplasm</location>
    </subcellularLocation>
</comment>
<comment type="PTM">
    <text evidence="2">Phosphorylated by host PRKCA.</text>
</comment>
<comment type="similarity">
    <text evidence="2">Belongs to the influenza viruses polymerase PB1 family.</text>
</comment>
<evidence type="ECO:0000250" key="1">
    <source>
        <dbReference type="UniProtKB" id="P03431"/>
    </source>
</evidence>
<evidence type="ECO:0000255" key="2">
    <source>
        <dbReference type="HAMAP-Rule" id="MF_04065"/>
    </source>
</evidence>
<evidence type="ECO:0000256" key="3">
    <source>
        <dbReference type="SAM" id="MobiDB-lite"/>
    </source>
</evidence>
<protein>
    <recommendedName>
        <fullName evidence="2">RNA-directed RNA polymerase catalytic subunit</fullName>
        <ecNumber evidence="2">2.7.7.48</ecNumber>
    </recommendedName>
    <alternativeName>
        <fullName evidence="2">Polymerase basic protein 1</fullName>
        <shortName evidence="2">PB1</shortName>
    </alternativeName>
    <alternativeName>
        <fullName evidence="2">RNA-directed RNA polymerase subunit P1</fullName>
    </alternativeName>
</protein>
<keyword id="KW-1262">Eukaryotic host gene expression shutoff by virus</keyword>
<keyword id="KW-1191">Eukaryotic host transcription shutoff by virus</keyword>
<keyword id="KW-1035">Host cytoplasm</keyword>
<keyword id="KW-1190">Host gene expression shutoff by virus</keyword>
<keyword id="KW-1048">Host nucleus</keyword>
<keyword id="KW-0945">Host-virus interaction</keyword>
<keyword id="KW-1104">Inhibition of host RNA polymerase II by virus</keyword>
<keyword id="KW-0547">Nucleotide-binding</keyword>
<keyword id="KW-0548">Nucleotidyltransferase</keyword>
<keyword id="KW-0597">Phosphoprotein</keyword>
<keyword id="KW-0696">RNA-directed RNA polymerase</keyword>
<keyword id="KW-0808">Transferase</keyword>
<keyword id="KW-0693">Viral RNA replication</keyword>
<keyword id="KW-1195">Viral transcription</keyword>
<feature type="chain" id="PRO_0000373058" description="RNA-directed RNA polymerase catalytic subunit">
    <location>
        <begin position="1"/>
        <end position="757"/>
    </location>
</feature>
<feature type="domain" description="RdRp catalytic" evidence="2">
    <location>
        <begin position="286"/>
        <end position="483"/>
    </location>
</feature>
<feature type="region of interest" description="Disordered" evidence="3">
    <location>
        <begin position="53"/>
        <end position="82"/>
    </location>
</feature>
<feature type="region of interest" description="Promoter-binding site" evidence="2">
    <location>
        <begin position="249"/>
        <end position="256"/>
    </location>
</feature>
<feature type="short sequence motif" description="Nuclear localization signal" evidence="2">
    <location>
        <begin position="187"/>
        <end position="195"/>
    </location>
</feature>
<feature type="short sequence motif" description="Nuclear localization signal" evidence="2">
    <location>
        <begin position="203"/>
        <end position="216"/>
    </location>
</feature>